<dbReference type="EMBL" id="AL450386">
    <property type="status" value="NOT_ANNOTATED_CDS"/>
    <property type="molecule type" value="Genomic_DNA"/>
</dbReference>
<dbReference type="GlyGen" id="A8MUL3">
    <property type="glycosylation" value="1 site"/>
</dbReference>
<dbReference type="BioMuta" id="HGNC:23299"/>
<dbReference type="AGR" id="HGNC:23299"/>
<dbReference type="GeneCards" id="ADARB2-AS1"/>
<dbReference type="HGNC" id="HGNC:23299">
    <property type="gene designation" value="ADARB2-AS1"/>
</dbReference>
<dbReference type="neXtProt" id="NX_A8MUL3"/>
<dbReference type="InParanoid" id="A8MUL3"/>
<dbReference type="PAN-GO" id="A8MUL3">
    <property type="GO annotations" value="0 GO annotations based on evolutionary models"/>
</dbReference>
<dbReference type="Pharos" id="A8MUL3">
    <property type="development level" value="Tdark"/>
</dbReference>
<dbReference type="Proteomes" id="UP000005640">
    <property type="component" value="Unplaced"/>
</dbReference>
<dbReference type="RNAct" id="A8MUL3">
    <property type="molecule type" value="protein"/>
</dbReference>
<comment type="caution">
    <text evidence="1">Product of a dubious CDS prediction. Probable non-coding RNA.</text>
</comment>
<accession>A8MUL3</accession>
<proteinExistence type="uncertain"/>
<sequence>MKQLFPPPPGTSLTHALGAWRGRERAQAATSLLASSASQFPTAVEDALMSVLTSHCAPSTPAATRAQQTGTRGHIHPACPCQQSCVGASRPPGRPQIFLPLTTALSLEAYAADTCSAADFLHNPSSWGKVWYLNEASFDLYSYHYFW</sequence>
<name>ADAS1_HUMAN</name>
<evidence type="ECO:0000305" key="1"/>
<feature type="chain" id="PRO_0000340730" description="Putative uncharacterized protein ADARB2-AS1">
    <location>
        <begin position="1"/>
        <end position="147"/>
    </location>
</feature>
<gene>
    <name type="primary">ADARB2-AS1</name>
    <name type="synonym">C10orf109</name>
    <name type="synonym">NCRNA00168</name>
</gene>
<reference key="1">
    <citation type="journal article" date="2004" name="Nature">
        <title>The DNA sequence and comparative analysis of human chromosome 10.</title>
        <authorList>
            <person name="Deloukas P."/>
            <person name="Earthrowl M.E."/>
            <person name="Grafham D.V."/>
            <person name="Rubenfield M."/>
            <person name="French L."/>
            <person name="Steward C.A."/>
            <person name="Sims S.K."/>
            <person name="Jones M.C."/>
            <person name="Searle S."/>
            <person name="Scott C."/>
            <person name="Howe K."/>
            <person name="Hunt S.E."/>
            <person name="Andrews T.D."/>
            <person name="Gilbert J.G.R."/>
            <person name="Swarbreck D."/>
            <person name="Ashurst J.L."/>
            <person name="Taylor A."/>
            <person name="Battles J."/>
            <person name="Bird C.P."/>
            <person name="Ainscough R."/>
            <person name="Almeida J.P."/>
            <person name="Ashwell R.I.S."/>
            <person name="Ambrose K.D."/>
            <person name="Babbage A.K."/>
            <person name="Bagguley C.L."/>
            <person name="Bailey J."/>
            <person name="Banerjee R."/>
            <person name="Bates K."/>
            <person name="Beasley H."/>
            <person name="Bray-Allen S."/>
            <person name="Brown A.J."/>
            <person name="Brown J.Y."/>
            <person name="Burford D.C."/>
            <person name="Burrill W."/>
            <person name="Burton J."/>
            <person name="Cahill P."/>
            <person name="Camire D."/>
            <person name="Carter N.P."/>
            <person name="Chapman J.C."/>
            <person name="Clark S.Y."/>
            <person name="Clarke G."/>
            <person name="Clee C.M."/>
            <person name="Clegg S."/>
            <person name="Corby N."/>
            <person name="Coulson A."/>
            <person name="Dhami P."/>
            <person name="Dutta I."/>
            <person name="Dunn M."/>
            <person name="Faulkner L."/>
            <person name="Frankish A."/>
            <person name="Frankland J.A."/>
            <person name="Garner P."/>
            <person name="Garnett J."/>
            <person name="Gribble S."/>
            <person name="Griffiths C."/>
            <person name="Grocock R."/>
            <person name="Gustafson E."/>
            <person name="Hammond S."/>
            <person name="Harley J.L."/>
            <person name="Hart E."/>
            <person name="Heath P.D."/>
            <person name="Ho T.P."/>
            <person name="Hopkins B."/>
            <person name="Horne J."/>
            <person name="Howden P.J."/>
            <person name="Huckle E."/>
            <person name="Hynds C."/>
            <person name="Johnson C."/>
            <person name="Johnson D."/>
            <person name="Kana A."/>
            <person name="Kay M."/>
            <person name="Kimberley A.M."/>
            <person name="Kershaw J.K."/>
            <person name="Kokkinaki M."/>
            <person name="Laird G.K."/>
            <person name="Lawlor S."/>
            <person name="Lee H.M."/>
            <person name="Leongamornlert D.A."/>
            <person name="Laird G."/>
            <person name="Lloyd C."/>
            <person name="Lloyd D.M."/>
            <person name="Loveland J."/>
            <person name="Lovell J."/>
            <person name="McLaren S."/>
            <person name="McLay K.E."/>
            <person name="McMurray A."/>
            <person name="Mashreghi-Mohammadi M."/>
            <person name="Matthews L."/>
            <person name="Milne S."/>
            <person name="Nickerson T."/>
            <person name="Nguyen M."/>
            <person name="Overton-Larty E."/>
            <person name="Palmer S.A."/>
            <person name="Pearce A.V."/>
            <person name="Peck A.I."/>
            <person name="Pelan S."/>
            <person name="Phillimore B."/>
            <person name="Porter K."/>
            <person name="Rice C.M."/>
            <person name="Rogosin A."/>
            <person name="Ross M.T."/>
            <person name="Sarafidou T."/>
            <person name="Sehra H.K."/>
            <person name="Shownkeen R."/>
            <person name="Skuce C.D."/>
            <person name="Smith M."/>
            <person name="Standring L."/>
            <person name="Sycamore N."/>
            <person name="Tester J."/>
            <person name="Thorpe A."/>
            <person name="Torcasso W."/>
            <person name="Tracey A."/>
            <person name="Tromans A."/>
            <person name="Tsolas J."/>
            <person name="Wall M."/>
            <person name="Walsh J."/>
            <person name="Wang H."/>
            <person name="Weinstock K."/>
            <person name="West A.P."/>
            <person name="Willey D.L."/>
            <person name="Whitehead S.L."/>
            <person name="Wilming L."/>
            <person name="Wray P.W."/>
            <person name="Young L."/>
            <person name="Chen Y."/>
            <person name="Lovering R.C."/>
            <person name="Moschonas N.K."/>
            <person name="Siebert R."/>
            <person name="Fechtel K."/>
            <person name="Bentley D."/>
            <person name="Durbin R.M."/>
            <person name="Hubbard T."/>
            <person name="Doucette-Stamm L."/>
            <person name="Beck S."/>
            <person name="Smith D.R."/>
            <person name="Rogers J."/>
        </authorList>
    </citation>
    <scope>NUCLEOTIDE SEQUENCE [LARGE SCALE GENOMIC DNA]</scope>
</reference>
<keyword id="KW-1185">Reference proteome</keyword>
<organism>
    <name type="scientific">Homo sapiens</name>
    <name type="common">Human</name>
    <dbReference type="NCBI Taxonomy" id="9606"/>
    <lineage>
        <taxon>Eukaryota</taxon>
        <taxon>Metazoa</taxon>
        <taxon>Chordata</taxon>
        <taxon>Craniata</taxon>
        <taxon>Vertebrata</taxon>
        <taxon>Euteleostomi</taxon>
        <taxon>Mammalia</taxon>
        <taxon>Eutheria</taxon>
        <taxon>Euarchontoglires</taxon>
        <taxon>Primates</taxon>
        <taxon>Haplorrhini</taxon>
        <taxon>Catarrhini</taxon>
        <taxon>Hominidae</taxon>
        <taxon>Homo</taxon>
    </lineage>
</organism>
<protein>
    <recommendedName>
        <fullName>Putative uncharacterized protein ADARB2-AS1</fullName>
    </recommendedName>
    <alternativeName>
        <fullName>ADARB2 antisense RNA 1</fullName>
    </alternativeName>
    <alternativeName>
        <fullName>ADARB2 antisense gene protein 1</fullName>
    </alternativeName>
</protein>